<keyword id="KW-0007">Acetylation</keyword>
<keyword id="KW-0877">Alternative promoter usage</keyword>
<keyword id="KW-0037">Angiogenesis</keyword>
<keyword id="KW-0067">ATP-binding</keyword>
<keyword id="KW-0965">Cell junction</keyword>
<keyword id="KW-1003">Cell membrane</keyword>
<keyword id="KW-0966">Cell projection</keyword>
<keyword id="KW-0963">Cytoplasm</keyword>
<keyword id="KW-0206">Cytoskeleton</keyword>
<keyword id="KW-0217">Developmental protein</keyword>
<keyword id="KW-1017">Isopeptide bond</keyword>
<keyword id="KW-0418">Kinase</keyword>
<keyword id="KW-0472">Membrane</keyword>
<keyword id="KW-0547">Nucleotide-binding</keyword>
<keyword id="KW-0539">Nucleus</keyword>
<keyword id="KW-0597">Phosphoprotein</keyword>
<keyword id="KW-1185">Reference proteome</keyword>
<keyword id="KW-0808">Transferase</keyword>
<keyword id="KW-0829">Tyrosine-protein kinase</keyword>
<keyword id="KW-0832">Ubl conjugation</keyword>
<organism>
    <name type="scientific">Rattus norvegicus</name>
    <name type="common">Rat</name>
    <dbReference type="NCBI Taxonomy" id="10116"/>
    <lineage>
        <taxon>Eukaryota</taxon>
        <taxon>Metazoa</taxon>
        <taxon>Chordata</taxon>
        <taxon>Craniata</taxon>
        <taxon>Vertebrata</taxon>
        <taxon>Euteleostomi</taxon>
        <taxon>Mammalia</taxon>
        <taxon>Eutheria</taxon>
        <taxon>Euarchontoglires</taxon>
        <taxon>Glires</taxon>
        <taxon>Rodentia</taxon>
        <taxon>Myomorpha</taxon>
        <taxon>Muroidea</taxon>
        <taxon>Muridae</taxon>
        <taxon>Murinae</taxon>
        <taxon>Rattus</taxon>
    </lineage>
</organism>
<feature type="initiator methionine" description="Removed" evidence="4">
    <location>
        <position position="1"/>
    </location>
</feature>
<feature type="chain" id="PRO_0000088079" description="Focal adhesion kinase 1">
    <location>
        <begin position="2"/>
        <end position="1055"/>
    </location>
</feature>
<feature type="domain" description="FERM" evidence="5">
    <location>
        <begin position="35"/>
        <end position="355"/>
    </location>
</feature>
<feature type="domain" description="Protein kinase" evidence="6">
    <location>
        <begin position="422"/>
        <end position="680"/>
    </location>
</feature>
<feature type="region of interest" description="Disordered" evidence="8">
    <location>
        <begin position="1"/>
        <end position="29"/>
    </location>
</feature>
<feature type="region of interest" description="Disordered" evidence="8">
    <location>
        <begin position="685"/>
        <end position="734"/>
    </location>
</feature>
<feature type="region of interest" description="Interaction with TGFB1I1" evidence="1">
    <location>
        <begin position="707"/>
        <end position="1055"/>
    </location>
</feature>
<feature type="region of interest" description="Disordered" evidence="8">
    <location>
        <begin position="837"/>
        <end position="923"/>
    </location>
</feature>
<feature type="region of interest" description="Interaction with ARHGEF28" evidence="1">
    <location>
        <begin position="915"/>
        <end position="1055"/>
    </location>
</feature>
<feature type="compositionally biased region" description="Polar residues" evidence="8">
    <location>
        <begin position="10"/>
        <end position="27"/>
    </location>
</feature>
<feature type="compositionally biased region" description="Basic and acidic residues" evidence="8">
    <location>
        <begin position="685"/>
        <end position="697"/>
    </location>
</feature>
<feature type="compositionally biased region" description="Basic and acidic residues" evidence="8">
    <location>
        <begin position="837"/>
        <end position="849"/>
    </location>
</feature>
<feature type="compositionally biased region" description="Pro residues" evidence="8">
    <location>
        <begin position="869"/>
        <end position="880"/>
    </location>
</feature>
<feature type="compositionally biased region" description="Polar residues" evidence="8">
    <location>
        <begin position="886"/>
        <end position="896"/>
    </location>
</feature>
<feature type="active site" description="Proton acceptor" evidence="6 7">
    <location>
        <position position="546"/>
    </location>
</feature>
<feature type="binding site" evidence="6">
    <location>
        <begin position="428"/>
        <end position="434"/>
    </location>
    <ligand>
        <name>ATP</name>
        <dbReference type="ChEBI" id="CHEBI:30616"/>
    </ligand>
</feature>
<feature type="binding site" evidence="6">
    <location>
        <position position="454"/>
    </location>
    <ligand>
        <name>ATP</name>
        <dbReference type="ChEBI" id="CHEBI:30616"/>
    </ligand>
</feature>
<feature type="binding site" evidence="6">
    <location>
        <begin position="500"/>
        <end position="502"/>
    </location>
    <ligand>
        <name>ATP</name>
        <dbReference type="ChEBI" id="CHEBI:30616"/>
    </ligand>
</feature>
<feature type="modified residue" description="N-acetylalanine" evidence="4">
    <location>
        <position position="2"/>
    </location>
</feature>
<feature type="modified residue" description="Phosphotyrosine" evidence="4">
    <location>
        <position position="5"/>
    </location>
</feature>
<feature type="modified residue" description="Phosphothreonine" evidence="4">
    <location>
        <position position="13"/>
    </location>
</feature>
<feature type="modified residue" description="Phosphoserine" evidence="4">
    <location>
        <position position="29"/>
    </location>
</feature>
<feature type="modified residue" description="Phosphoserine" evidence="2">
    <location>
        <position position="54"/>
    </location>
</feature>
<feature type="modified residue" description="Phosphotyrosine; by autocatalysis" evidence="10">
    <location>
        <position position="397"/>
    </location>
</feature>
<feature type="modified residue" description="Phosphotyrosine" evidence="4">
    <location>
        <position position="407"/>
    </location>
</feature>
<feature type="modified residue" description="Phosphotyrosine" evidence="4">
    <location>
        <position position="570"/>
    </location>
</feature>
<feature type="modified residue" description="Phosphotyrosine" evidence="15">
    <location>
        <position position="576"/>
    </location>
</feature>
<feature type="modified residue" description="Phosphotyrosine; by RET and SRC" evidence="4">
    <location>
        <position position="577"/>
    </location>
</feature>
<feature type="modified residue" description="Phosphoserine" evidence="4">
    <location>
        <position position="580"/>
    </location>
</feature>
<feature type="modified residue" description="Phosphoserine" evidence="9">
    <location>
        <position position="722"/>
    </location>
</feature>
<feature type="modified residue" description="Phosphoserine; by CDK5" evidence="2">
    <location>
        <position position="732"/>
    </location>
</feature>
<feature type="modified residue" description="Phosphoserine" evidence="4">
    <location>
        <position position="843"/>
    </location>
</feature>
<feature type="modified residue" description="Phosphotyrosine" evidence="4">
    <location>
        <position position="861"/>
    </location>
</feature>
<feature type="modified residue" description="Phosphoserine" evidence="9 15">
    <location>
        <position position="913"/>
    </location>
</feature>
<feature type="modified residue" description="Phosphothreonine" evidence="4">
    <location>
        <position position="917"/>
    </location>
</feature>
<feature type="modified residue" description="Phosphotyrosine" evidence="15">
    <location>
        <position position="928"/>
    </location>
</feature>
<feature type="cross-link" description="Glycyl lysine isopeptide (Lys-Gly) (interchain with G-Cter in SUMO)" evidence="10">
    <location>
        <position position="152"/>
    </location>
</feature>
<feature type="splice variant" id="VSP_042172" description="In isoform 2." evidence="13">
    <location>
        <begin position="1"/>
        <end position="692"/>
    </location>
</feature>
<feature type="mutagenesis site" description="Abolishes sumoylation." evidence="10">
    <original>K</original>
    <variation>R</variation>
    <location>
        <position position="152"/>
    </location>
</feature>
<dbReference type="EC" id="2.7.10.2"/>
<dbReference type="EMBL" id="AF020777">
    <property type="protein sequence ID" value="AAB72203.1"/>
    <property type="molecule type" value="mRNA"/>
</dbReference>
<dbReference type="EMBL" id="U43942">
    <property type="protein sequence ID" value="AAA86280.1"/>
    <property type="molecule type" value="mRNA"/>
</dbReference>
<dbReference type="RefSeq" id="NP_037213.1">
    <molecule id="O35346-1"/>
    <property type="nucleotide sequence ID" value="NM_013081.2"/>
</dbReference>
<dbReference type="SMR" id="O35346"/>
<dbReference type="BioGRID" id="247643">
    <property type="interactions" value="7"/>
</dbReference>
<dbReference type="CORUM" id="O35346"/>
<dbReference type="DIP" id="DIP-41330N"/>
<dbReference type="FunCoup" id="O35346">
    <property type="interactions" value="3998"/>
</dbReference>
<dbReference type="IntAct" id="O35346">
    <property type="interactions" value="6"/>
</dbReference>
<dbReference type="MINT" id="O35346"/>
<dbReference type="STRING" id="10116.ENSRNOP00000075518"/>
<dbReference type="BindingDB" id="O35346"/>
<dbReference type="ChEMBL" id="CHEMBL5773"/>
<dbReference type="iPTMnet" id="O35346"/>
<dbReference type="PhosphoSitePlus" id="O35346"/>
<dbReference type="jPOST" id="O35346"/>
<dbReference type="PaxDb" id="10116-ENSRNOP00000011219"/>
<dbReference type="PeptideAtlas" id="O35346"/>
<dbReference type="GeneID" id="25614"/>
<dbReference type="KEGG" id="rno:25614"/>
<dbReference type="UCSC" id="RGD:3443">
    <molecule id="O35346-1"/>
    <property type="organism name" value="rat"/>
</dbReference>
<dbReference type="AGR" id="RGD:3443"/>
<dbReference type="CTD" id="5747"/>
<dbReference type="RGD" id="3443">
    <property type="gene designation" value="Ptk2"/>
</dbReference>
<dbReference type="VEuPathDB" id="HostDB:ENSRNOG00000007916"/>
<dbReference type="eggNOG" id="KOG4257">
    <property type="taxonomic scope" value="Eukaryota"/>
</dbReference>
<dbReference type="HOGENOM" id="CLU_002646_0_0_1"/>
<dbReference type="InParanoid" id="O35346"/>
<dbReference type="PhylomeDB" id="O35346"/>
<dbReference type="BRENDA" id="2.7.10.2">
    <property type="organism ID" value="5301"/>
</dbReference>
<dbReference type="Reactome" id="R-RNO-111465">
    <property type="pathway name" value="Apoptotic cleavage of cellular proteins"/>
</dbReference>
<dbReference type="Reactome" id="R-RNO-2029482">
    <property type="pathway name" value="Regulation of actin dynamics for phagocytic cup formation"/>
</dbReference>
<dbReference type="Reactome" id="R-RNO-354192">
    <property type="pathway name" value="Integrin signaling"/>
</dbReference>
<dbReference type="Reactome" id="R-RNO-354194">
    <property type="pathway name" value="GRB2:SOS provides linkage to MAPK signaling for Integrins"/>
</dbReference>
<dbReference type="Reactome" id="R-RNO-372708">
    <property type="pathway name" value="p130Cas linkage to MAPK signaling for integrins"/>
</dbReference>
<dbReference type="Reactome" id="R-RNO-375165">
    <property type="pathway name" value="NCAM signaling for neurite out-growth"/>
</dbReference>
<dbReference type="Reactome" id="R-RNO-3928662">
    <property type="pathway name" value="EPHB-mediated forward signaling"/>
</dbReference>
<dbReference type="Reactome" id="R-RNO-418885">
    <property type="pathway name" value="DCC mediated attractive signaling"/>
</dbReference>
<dbReference type="Reactome" id="R-RNO-4420097">
    <property type="pathway name" value="VEGFA-VEGFR2 Pathway"/>
</dbReference>
<dbReference type="Reactome" id="R-RNO-5663213">
    <property type="pathway name" value="RHO GTPases Activate WASPs and WAVEs"/>
</dbReference>
<dbReference type="Reactome" id="R-RNO-5673001">
    <property type="pathway name" value="RAF/MAP kinase cascade"/>
</dbReference>
<dbReference type="Reactome" id="R-RNO-8874081">
    <property type="pathway name" value="MET activates PTK2 signaling"/>
</dbReference>
<dbReference type="Reactome" id="R-RNO-9009391">
    <property type="pathway name" value="Extra-nuclear estrogen signaling"/>
</dbReference>
<dbReference type="Reactome" id="R-RNO-9860927">
    <property type="pathway name" value="Turbulent (oscillatory, disturbed) flow shear stress activates signaling by PIEZO1 and integrins in endothelial cells"/>
</dbReference>
<dbReference type="PRO" id="PR:O35346"/>
<dbReference type="Proteomes" id="UP000002494">
    <property type="component" value="Chromosome 7"/>
</dbReference>
<dbReference type="Bgee" id="ENSRNOG00000007916">
    <property type="expression patterns" value="Expressed in lung and 19 other cell types or tissues"/>
</dbReference>
<dbReference type="ExpressionAtlas" id="O35346">
    <property type="expression patterns" value="baseline and differential"/>
</dbReference>
<dbReference type="GO" id="GO:0016324">
    <property type="term" value="C:apical plasma membrane"/>
    <property type="evidence" value="ECO:0000314"/>
    <property type="project" value="RGD"/>
</dbReference>
<dbReference type="GO" id="GO:0016323">
    <property type="term" value="C:basolateral plasma membrane"/>
    <property type="evidence" value="ECO:0000314"/>
    <property type="project" value="RGD"/>
</dbReference>
<dbReference type="GO" id="GO:0005938">
    <property type="term" value="C:cell cortex"/>
    <property type="evidence" value="ECO:0007669"/>
    <property type="project" value="UniProtKB-SubCell"/>
</dbReference>
<dbReference type="GO" id="GO:0005813">
    <property type="term" value="C:centrosome"/>
    <property type="evidence" value="ECO:0007669"/>
    <property type="project" value="UniProtKB-SubCell"/>
</dbReference>
<dbReference type="GO" id="GO:0036064">
    <property type="term" value="C:ciliary basal body"/>
    <property type="evidence" value="ECO:0000250"/>
    <property type="project" value="UniProtKB"/>
</dbReference>
<dbReference type="GO" id="GO:0005829">
    <property type="term" value="C:cytosol"/>
    <property type="evidence" value="ECO:0000250"/>
    <property type="project" value="UniProtKB"/>
</dbReference>
<dbReference type="GO" id="GO:0005925">
    <property type="term" value="C:focal adhesion"/>
    <property type="evidence" value="ECO:0000314"/>
    <property type="project" value="RGD"/>
</dbReference>
<dbReference type="GO" id="GO:0098978">
    <property type="term" value="C:glutamatergic synapse"/>
    <property type="evidence" value="ECO:0000314"/>
    <property type="project" value="SynGO"/>
</dbReference>
<dbReference type="GO" id="GO:0014704">
    <property type="term" value="C:intercalated disc"/>
    <property type="evidence" value="ECO:0000314"/>
    <property type="project" value="RGD"/>
</dbReference>
<dbReference type="GO" id="GO:0030027">
    <property type="term" value="C:lamellipodium"/>
    <property type="evidence" value="ECO:0000266"/>
    <property type="project" value="RGD"/>
</dbReference>
<dbReference type="GO" id="GO:0016604">
    <property type="term" value="C:nuclear body"/>
    <property type="evidence" value="ECO:0000314"/>
    <property type="project" value="RGD"/>
</dbReference>
<dbReference type="GO" id="GO:0005634">
    <property type="term" value="C:nucleus"/>
    <property type="evidence" value="ECO:0000266"/>
    <property type="project" value="RGD"/>
</dbReference>
<dbReference type="GO" id="GO:0048471">
    <property type="term" value="C:perinuclear region of cytoplasm"/>
    <property type="evidence" value="ECO:0007669"/>
    <property type="project" value="UniProtKB-SubCell"/>
</dbReference>
<dbReference type="GO" id="GO:0005886">
    <property type="term" value="C:plasma membrane"/>
    <property type="evidence" value="ECO:0000318"/>
    <property type="project" value="GO_Central"/>
</dbReference>
<dbReference type="GO" id="GO:0098794">
    <property type="term" value="C:postsynapse"/>
    <property type="evidence" value="ECO:0000314"/>
    <property type="project" value="SynGO"/>
</dbReference>
<dbReference type="GO" id="GO:0042383">
    <property type="term" value="C:sarcolemma"/>
    <property type="evidence" value="ECO:0000314"/>
    <property type="project" value="RGD"/>
</dbReference>
<dbReference type="GO" id="GO:0001725">
    <property type="term" value="C:stress fiber"/>
    <property type="evidence" value="ECO:0000266"/>
    <property type="project" value="RGD"/>
</dbReference>
<dbReference type="GO" id="GO:0003779">
    <property type="term" value="F:actin binding"/>
    <property type="evidence" value="ECO:0000266"/>
    <property type="project" value="RGD"/>
</dbReference>
<dbReference type="GO" id="GO:0005524">
    <property type="term" value="F:ATP binding"/>
    <property type="evidence" value="ECO:0007669"/>
    <property type="project" value="UniProtKB-KW"/>
</dbReference>
<dbReference type="GO" id="GO:0042802">
    <property type="term" value="F:identical protein binding"/>
    <property type="evidence" value="ECO:0000353"/>
    <property type="project" value="IntAct"/>
</dbReference>
<dbReference type="GO" id="GO:0005178">
    <property type="term" value="F:integrin binding"/>
    <property type="evidence" value="ECO:0000353"/>
    <property type="project" value="RGD"/>
</dbReference>
<dbReference type="GO" id="GO:0008432">
    <property type="term" value="F:JUN kinase binding"/>
    <property type="evidence" value="ECO:0000266"/>
    <property type="project" value="RGD"/>
</dbReference>
<dbReference type="GO" id="GO:0140677">
    <property type="term" value="F:molecular function activator activity"/>
    <property type="evidence" value="ECO:0000266"/>
    <property type="project" value="RGD"/>
</dbReference>
<dbReference type="GO" id="GO:0004715">
    <property type="term" value="F:non-membrane spanning protein tyrosine kinase activity"/>
    <property type="evidence" value="ECO:0000250"/>
    <property type="project" value="UniProtKB"/>
</dbReference>
<dbReference type="GO" id="GO:0019902">
    <property type="term" value="F:phosphatase binding"/>
    <property type="evidence" value="ECO:0000314"/>
    <property type="project" value="RGD"/>
</dbReference>
<dbReference type="GO" id="GO:0043548">
    <property type="term" value="F:phosphatidylinositol 3-kinase binding"/>
    <property type="evidence" value="ECO:0000353"/>
    <property type="project" value="RGD"/>
</dbReference>
<dbReference type="GO" id="GO:0019901">
    <property type="term" value="F:protein kinase binding"/>
    <property type="evidence" value="ECO:0000266"/>
    <property type="project" value="RGD"/>
</dbReference>
<dbReference type="GO" id="GO:0019903">
    <property type="term" value="F:protein phosphatase binding"/>
    <property type="evidence" value="ECO:0000266"/>
    <property type="project" value="RGD"/>
</dbReference>
<dbReference type="GO" id="GO:0004713">
    <property type="term" value="F:protein tyrosine kinase activity"/>
    <property type="evidence" value="ECO:0000250"/>
    <property type="project" value="UniProtKB"/>
</dbReference>
<dbReference type="GO" id="GO:0004725">
    <property type="term" value="F:protein tyrosine phosphatase activity"/>
    <property type="evidence" value="ECO:0000266"/>
    <property type="project" value="RGD"/>
</dbReference>
<dbReference type="GO" id="GO:0044877">
    <property type="term" value="F:protein-containing complex binding"/>
    <property type="evidence" value="ECO:0000353"/>
    <property type="project" value="RGD"/>
</dbReference>
<dbReference type="GO" id="GO:0042169">
    <property type="term" value="F:SH2 domain binding"/>
    <property type="evidence" value="ECO:0000266"/>
    <property type="project" value="RGD"/>
</dbReference>
<dbReference type="GO" id="GO:0001525">
    <property type="term" value="P:angiogenesis"/>
    <property type="evidence" value="ECO:0000266"/>
    <property type="project" value="RGD"/>
</dbReference>
<dbReference type="GO" id="GO:0007409">
    <property type="term" value="P:axonogenesis"/>
    <property type="evidence" value="ECO:0000266"/>
    <property type="project" value="RGD"/>
</dbReference>
<dbReference type="GO" id="GO:0001568">
    <property type="term" value="P:blood vessel development"/>
    <property type="evidence" value="ECO:0000266"/>
    <property type="project" value="RGD"/>
</dbReference>
<dbReference type="GO" id="GO:0016477">
    <property type="term" value="P:cell migration"/>
    <property type="evidence" value="ECO:0000266"/>
    <property type="project" value="RGD"/>
</dbReference>
<dbReference type="GO" id="GO:0071315">
    <property type="term" value="P:cellular response to morphine"/>
    <property type="evidence" value="ECO:0000270"/>
    <property type="project" value="RGD"/>
</dbReference>
<dbReference type="GO" id="GO:0071560">
    <property type="term" value="P:cellular response to transforming growth factor beta stimulus"/>
    <property type="evidence" value="ECO:0000266"/>
    <property type="project" value="RGD"/>
</dbReference>
<dbReference type="GO" id="GO:0021955">
    <property type="term" value="P:central nervous system neuron axonogenesis"/>
    <property type="evidence" value="ECO:0000266"/>
    <property type="project" value="RGD"/>
</dbReference>
<dbReference type="GO" id="GO:0043542">
    <property type="term" value="P:endothelial cell migration"/>
    <property type="evidence" value="ECO:0000266"/>
    <property type="project" value="RGD"/>
</dbReference>
<dbReference type="GO" id="GO:0048013">
    <property type="term" value="P:ephrin receptor signaling pathway"/>
    <property type="evidence" value="ECO:0000250"/>
    <property type="project" value="UniProtKB"/>
</dbReference>
<dbReference type="GO" id="GO:0007173">
    <property type="term" value="P:epidermal growth factor receptor signaling pathway"/>
    <property type="evidence" value="ECO:0000318"/>
    <property type="project" value="GO_Central"/>
</dbReference>
<dbReference type="GO" id="GO:0030198">
    <property type="term" value="P:extracellular matrix organization"/>
    <property type="evidence" value="ECO:0000266"/>
    <property type="project" value="RGD"/>
</dbReference>
<dbReference type="GO" id="GO:0045444">
    <property type="term" value="P:fat cell differentiation"/>
    <property type="evidence" value="ECO:0000270"/>
    <property type="project" value="RGD"/>
</dbReference>
<dbReference type="GO" id="GO:0060396">
    <property type="term" value="P:growth hormone receptor signaling pathway"/>
    <property type="evidence" value="ECO:0000266"/>
    <property type="project" value="RGD"/>
</dbReference>
<dbReference type="GO" id="GO:0007229">
    <property type="term" value="P:integrin-mediated signaling pathway"/>
    <property type="evidence" value="ECO:0000250"/>
    <property type="project" value="UniProtKB"/>
</dbReference>
<dbReference type="GO" id="GO:0030644">
    <property type="term" value="P:intracellular chloride ion homeostasis"/>
    <property type="evidence" value="ECO:0000315"/>
    <property type="project" value="RGD"/>
</dbReference>
<dbReference type="GO" id="GO:0007254">
    <property type="term" value="P:JNK cascade"/>
    <property type="evidence" value="ECO:0000315"/>
    <property type="project" value="RGD"/>
</dbReference>
<dbReference type="GO" id="GO:0000165">
    <property type="term" value="P:MAPK cascade"/>
    <property type="evidence" value="ECO:0000315"/>
    <property type="project" value="RGD"/>
</dbReference>
<dbReference type="GO" id="GO:0000226">
    <property type="term" value="P:microtubule cytoskeleton organization"/>
    <property type="evidence" value="ECO:0000266"/>
    <property type="project" value="RGD"/>
</dbReference>
<dbReference type="GO" id="GO:2000811">
    <property type="term" value="P:negative regulation of anoikis"/>
    <property type="evidence" value="ECO:0000266"/>
    <property type="project" value="RGD"/>
</dbReference>
<dbReference type="GO" id="GO:0043066">
    <property type="term" value="P:negative regulation of apoptotic process"/>
    <property type="evidence" value="ECO:0000315"/>
    <property type="project" value="RGD"/>
</dbReference>
<dbReference type="GO" id="GO:0010507">
    <property type="term" value="P:negative regulation of autophagy"/>
    <property type="evidence" value="ECO:0000266"/>
    <property type="project" value="RGD"/>
</dbReference>
<dbReference type="GO" id="GO:0050771">
    <property type="term" value="P:negative regulation of axonogenesis"/>
    <property type="evidence" value="ECO:0000266"/>
    <property type="project" value="RGD"/>
</dbReference>
<dbReference type="GO" id="GO:0030336">
    <property type="term" value="P:negative regulation of cell migration"/>
    <property type="evidence" value="ECO:0000315"/>
    <property type="project" value="RGD"/>
</dbReference>
<dbReference type="GO" id="GO:0022408">
    <property type="term" value="P:negative regulation of cell-cell adhesion"/>
    <property type="evidence" value="ECO:0000266"/>
    <property type="project" value="RGD"/>
</dbReference>
<dbReference type="GO" id="GO:0046621">
    <property type="term" value="P:negative regulation of organ growth"/>
    <property type="evidence" value="ECO:0000266"/>
    <property type="project" value="RGD"/>
</dbReference>
<dbReference type="GO" id="GO:0051964">
    <property type="term" value="P:negative regulation of synapse assembly"/>
    <property type="evidence" value="ECO:0000266"/>
    <property type="project" value="RGD"/>
</dbReference>
<dbReference type="GO" id="GO:0001764">
    <property type="term" value="P:neuron migration"/>
    <property type="evidence" value="ECO:0000266"/>
    <property type="project" value="RGD"/>
</dbReference>
<dbReference type="GO" id="GO:0007097">
    <property type="term" value="P:nuclear migration"/>
    <property type="evidence" value="ECO:0000266"/>
    <property type="project" value="RGD"/>
</dbReference>
<dbReference type="GO" id="GO:0035265">
    <property type="term" value="P:organ growth"/>
    <property type="evidence" value="ECO:0000266"/>
    <property type="project" value="RGD"/>
</dbReference>
<dbReference type="GO" id="GO:0018108">
    <property type="term" value="P:peptidyl-tyrosine phosphorylation"/>
    <property type="evidence" value="ECO:0000250"/>
    <property type="project" value="UniProtKB"/>
</dbReference>
<dbReference type="GO" id="GO:0010613">
    <property type="term" value="P:positive regulation of cardiac muscle hypertrophy"/>
    <property type="evidence" value="ECO:0000266"/>
    <property type="project" value="RGD"/>
</dbReference>
<dbReference type="GO" id="GO:0045785">
    <property type="term" value="P:positive regulation of cell adhesion"/>
    <property type="evidence" value="ECO:0000315"/>
    <property type="project" value="RGD"/>
</dbReference>
<dbReference type="GO" id="GO:0030307">
    <property type="term" value="P:positive regulation of cell growth"/>
    <property type="evidence" value="ECO:0000315"/>
    <property type="project" value="RGD"/>
</dbReference>
<dbReference type="GO" id="GO:0030335">
    <property type="term" value="P:positive regulation of cell migration"/>
    <property type="evidence" value="ECO:0000315"/>
    <property type="project" value="RGD"/>
</dbReference>
<dbReference type="GO" id="GO:0008284">
    <property type="term" value="P:positive regulation of cell population proliferation"/>
    <property type="evidence" value="ECO:0000250"/>
    <property type="project" value="UniProtKB"/>
</dbReference>
<dbReference type="GO" id="GO:0010634">
    <property type="term" value="P:positive regulation of epithelial cell migration"/>
    <property type="evidence" value="ECO:0000266"/>
    <property type="project" value="RGD"/>
</dbReference>
<dbReference type="GO" id="GO:0010718">
    <property type="term" value="P:positive regulation of epithelial to mesenchymal transition"/>
    <property type="evidence" value="ECO:0000266"/>
    <property type="project" value="RGD"/>
</dbReference>
<dbReference type="GO" id="GO:0010763">
    <property type="term" value="P:positive regulation of fibroblast migration"/>
    <property type="evidence" value="ECO:0000266"/>
    <property type="project" value="RGD"/>
</dbReference>
<dbReference type="GO" id="GO:0060252">
    <property type="term" value="P:positive regulation of glial cell proliferation"/>
    <property type="evidence" value="ECO:0000315"/>
    <property type="project" value="RGD"/>
</dbReference>
<dbReference type="GO" id="GO:0010759">
    <property type="term" value="P:positive regulation of macrophage chemotaxis"/>
    <property type="evidence" value="ECO:0000266"/>
    <property type="project" value="RGD"/>
</dbReference>
<dbReference type="GO" id="GO:0120041">
    <property type="term" value="P:positive regulation of macrophage proliferation"/>
    <property type="evidence" value="ECO:0000266"/>
    <property type="project" value="RGD"/>
</dbReference>
<dbReference type="GO" id="GO:0050766">
    <property type="term" value="P:positive regulation of phagocytosis"/>
    <property type="evidence" value="ECO:0000315"/>
    <property type="project" value="RGD"/>
</dbReference>
<dbReference type="GO" id="GO:0051897">
    <property type="term" value="P:positive regulation of phosphatidylinositol 3-kinase/protein kinase B signal transduction"/>
    <property type="evidence" value="ECO:0000250"/>
    <property type="project" value="UniProtKB"/>
</dbReference>
<dbReference type="GO" id="GO:0045860">
    <property type="term" value="P:positive regulation of protein kinase activity"/>
    <property type="evidence" value="ECO:0000250"/>
    <property type="project" value="UniProtKB"/>
</dbReference>
<dbReference type="GO" id="GO:0001934">
    <property type="term" value="P:positive regulation of protein phosphorylation"/>
    <property type="evidence" value="ECO:0000250"/>
    <property type="project" value="UniProtKB"/>
</dbReference>
<dbReference type="GO" id="GO:0014911">
    <property type="term" value="P:positive regulation of smooth muscle cell migration"/>
    <property type="evidence" value="ECO:0000315"/>
    <property type="project" value="RGD"/>
</dbReference>
<dbReference type="GO" id="GO:0048661">
    <property type="term" value="P:positive regulation of smooth muscle cell proliferation"/>
    <property type="evidence" value="ECO:0000315"/>
    <property type="project" value="RGD"/>
</dbReference>
<dbReference type="GO" id="GO:0050806">
    <property type="term" value="P:positive regulation of synaptic transmission"/>
    <property type="evidence" value="ECO:0000315"/>
    <property type="project" value="RGD"/>
</dbReference>
<dbReference type="GO" id="GO:2000060">
    <property type="term" value="P:positive regulation of ubiquitin-dependent protein catabolic process"/>
    <property type="evidence" value="ECO:0000250"/>
    <property type="project" value="UniProtKB"/>
</dbReference>
<dbReference type="GO" id="GO:0090303">
    <property type="term" value="P:positive regulation of wound healing"/>
    <property type="evidence" value="ECO:0000266"/>
    <property type="project" value="RGD"/>
</dbReference>
<dbReference type="GO" id="GO:0046777">
    <property type="term" value="P:protein autophosphorylation"/>
    <property type="evidence" value="ECO:0000250"/>
    <property type="project" value="UniProtKB"/>
</dbReference>
<dbReference type="GO" id="GO:0030155">
    <property type="term" value="P:regulation of cell adhesion"/>
    <property type="evidence" value="ECO:0000318"/>
    <property type="project" value="GO_Central"/>
</dbReference>
<dbReference type="GO" id="GO:0033628">
    <property type="term" value="P:regulation of cell adhesion mediated by integrin"/>
    <property type="evidence" value="ECO:0000250"/>
    <property type="project" value="UniProtKB"/>
</dbReference>
<dbReference type="GO" id="GO:0042127">
    <property type="term" value="P:regulation of cell population proliferation"/>
    <property type="evidence" value="ECO:0000250"/>
    <property type="project" value="UniProtKB"/>
</dbReference>
<dbReference type="GO" id="GO:0008360">
    <property type="term" value="P:regulation of cell shape"/>
    <property type="evidence" value="ECO:0000250"/>
    <property type="project" value="UniProtKB"/>
</dbReference>
<dbReference type="GO" id="GO:0010632">
    <property type="term" value="P:regulation of epithelial cell migration"/>
    <property type="evidence" value="ECO:0000266"/>
    <property type="project" value="RGD"/>
</dbReference>
<dbReference type="GO" id="GO:0051893">
    <property type="term" value="P:regulation of focal adhesion assembly"/>
    <property type="evidence" value="ECO:0000266"/>
    <property type="project" value="RGD"/>
</dbReference>
<dbReference type="GO" id="GO:1905274">
    <property type="term" value="P:regulation of modification of postsynaptic actin cytoskeleton"/>
    <property type="evidence" value="ECO:0000266"/>
    <property type="project" value="RGD"/>
</dbReference>
<dbReference type="GO" id="GO:0045667">
    <property type="term" value="P:regulation of osteoblast differentiation"/>
    <property type="evidence" value="ECO:0000250"/>
    <property type="project" value="UniProtKB"/>
</dbReference>
<dbReference type="GO" id="GO:1900024">
    <property type="term" value="P:regulation of substrate adhesion-dependent cell spreading"/>
    <property type="evidence" value="ECO:0000266"/>
    <property type="project" value="RGD"/>
</dbReference>
<dbReference type="GO" id="GO:0046685">
    <property type="term" value="P:response to arsenic-containing substance"/>
    <property type="evidence" value="ECO:0000270"/>
    <property type="project" value="RGD"/>
</dbReference>
<dbReference type="GO" id="GO:0032355">
    <property type="term" value="P:response to estradiol"/>
    <property type="evidence" value="ECO:0000270"/>
    <property type="project" value="RGD"/>
</dbReference>
<dbReference type="GO" id="GO:0009749">
    <property type="term" value="P:response to glucose"/>
    <property type="evidence" value="ECO:0000270"/>
    <property type="project" value="RGD"/>
</dbReference>
<dbReference type="GO" id="GO:0009612">
    <property type="term" value="P:response to mechanical stimulus"/>
    <property type="evidence" value="ECO:0000270"/>
    <property type="project" value="RGD"/>
</dbReference>
<dbReference type="GO" id="GO:0009410">
    <property type="term" value="P:response to xenobiotic stimulus"/>
    <property type="evidence" value="ECO:0000270"/>
    <property type="project" value="RGD"/>
</dbReference>
<dbReference type="GO" id="GO:0007172">
    <property type="term" value="P:signal complex assembly"/>
    <property type="evidence" value="ECO:0007669"/>
    <property type="project" value="InterPro"/>
</dbReference>
<dbReference type="GO" id="GO:0007179">
    <property type="term" value="P:transforming growth factor beta receptor signaling pathway"/>
    <property type="evidence" value="ECO:0000266"/>
    <property type="project" value="RGD"/>
</dbReference>
<dbReference type="GO" id="GO:0001570">
    <property type="term" value="P:vasculogenesis"/>
    <property type="evidence" value="ECO:0000266"/>
    <property type="project" value="RGD"/>
</dbReference>
<dbReference type="GO" id="GO:0042311">
    <property type="term" value="P:vasodilation"/>
    <property type="evidence" value="ECO:0000315"/>
    <property type="project" value="RGD"/>
</dbReference>
<dbReference type="CDD" id="cd14473">
    <property type="entry name" value="FERM_B-lobe"/>
    <property type="match status" value="1"/>
</dbReference>
<dbReference type="CDD" id="cd13190">
    <property type="entry name" value="FERM_C_FAK1"/>
    <property type="match status" value="1"/>
</dbReference>
<dbReference type="CDD" id="cd05056">
    <property type="entry name" value="PTKc_FAK"/>
    <property type="match status" value="1"/>
</dbReference>
<dbReference type="FunFam" id="1.20.120.330:FF:000001">
    <property type="entry name" value="focal adhesion kinase 1 isoform X1"/>
    <property type="match status" value="1"/>
</dbReference>
<dbReference type="FunFam" id="2.30.29.30:FF:000058">
    <property type="entry name" value="focal adhesion kinase 1 isoform X1"/>
    <property type="match status" value="1"/>
</dbReference>
<dbReference type="FunFam" id="3.10.20.90:FF:000021">
    <property type="entry name" value="focal adhesion kinase 1 isoform X1"/>
    <property type="match status" value="1"/>
</dbReference>
<dbReference type="FunFam" id="3.30.200.20:FF:000047">
    <property type="entry name" value="focal adhesion kinase 1 isoform X2"/>
    <property type="match status" value="1"/>
</dbReference>
<dbReference type="FunFam" id="1.10.510.10:FF:000039">
    <property type="entry name" value="Focal adhesion kinase, isoform D"/>
    <property type="match status" value="1"/>
</dbReference>
<dbReference type="FunFam" id="1.20.80.10:FF:000004">
    <property type="entry name" value="Protein-tyrosine kinase 2-beta isoform 1"/>
    <property type="match status" value="1"/>
</dbReference>
<dbReference type="Gene3D" id="1.20.80.10">
    <property type="match status" value="1"/>
</dbReference>
<dbReference type="Gene3D" id="1.20.120.330">
    <property type="entry name" value="Nucleotidyltransferases domain 2"/>
    <property type="match status" value="1"/>
</dbReference>
<dbReference type="Gene3D" id="3.10.20.90">
    <property type="entry name" value="Phosphatidylinositol 3-kinase Catalytic Subunit, Chain A, domain 1"/>
    <property type="match status" value="1"/>
</dbReference>
<dbReference type="Gene3D" id="3.30.200.20">
    <property type="entry name" value="Phosphorylase Kinase, domain 1"/>
    <property type="match status" value="1"/>
</dbReference>
<dbReference type="Gene3D" id="2.30.29.30">
    <property type="entry name" value="Pleckstrin-homology domain (PH domain)/Phosphotyrosine-binding domain (PTB)"/>
    <property type="match status" value="1"/>
</dbReference>
<dbReference type="Gene3D" id="1.20.5.540">
    <property type="entry name" value="Single helix bin"/>
    <property type="match status" value="1"/>
</dbReference>
<dbReference type="Gene3D" id="1.10.510.10">
    <property type="entry name" value="Transferase(Phosphotransferase) domain 1"/>
    <property type="match status" value="1"/>
</dbReference>
<dbReference type="InterPro" id="IPR019749">
    <property type="entry name" value="Band_41_domain"/>
</dbReference>
<dbReference type="InterPro" id="IPR041390">
    <property type="entry name" value="FADK_N"/>
</dbReference>
<dbReference type="InterPro" id="IPR049385">
    <property type="entry name" value="FAK1-like_FERM_C"/>
</dbReference>
<dbReference type="InterPro" id="IPR041784">
    <property type="entry name" value="FAK1/PYK2_FERM_C"/>
</dbReference>
<dbReference type="InterPro" id="IPR014352">
    <property type="entry name" value="FERM/acyl-CoA-bd_prot_sf"/>
</dbReference>
<dbReference type="InterPro" id="IPR035963">
    <property type="entry name" value="FERM_2"/>
</dbReference>
<dbReference type="InterPro" id="IPR019748">
    <property type="entry name" value="FERM_central"/>
</dbReference>
<dbReference type="InterPro" id="IPR000299">
    <property type="entry name" value="FERM_domain"/>
</dbReference>
<dbReference type="InterPro" id="IPR036137">
    <property type="entry name" value="Focal_adhe_kin_target_dom_sf"/>
</dbReference>
<dbReference type="InterPro" id="IPR005189">
    <property type="entry name" value="Focal_adhesion_kin_target_dom"/>
</dbReference>
<dbReference type="InterPro" id="IPR011009">
    <property type="entry name" value="Kinase-like_dom_sf"/>
</dbReference>
<dbReference type="InterPro" id="IPR011993">
    <property type="entry name" value="PH-like_dom_sf"/>
</dbReference>
<dbReference type="InterPro" id="IPR000719">
    <property type="entry name" value="Prot_kinase_dom"/>
</dbReference>
<dbReference type="InterPro" id="IPR017441">
    <property type="entry name" value="Protein_kinase_ATP_BS"/>
</dbReference>
<dbReference type="InterPro" id="IPR001245">
    <property type="entry name" value="Ser-Thr/Tyr_kinase_cat_dom"/>
</dbReference>
<dbReference type="InterPro" id="IPR008266">
    <property type="entry name" value="Tyr_kinase_AS"/>
</dbReference>
<dbReference type="InterPro" id="IPR020635">
    <property type="entry name" value="Tyr_kinase_cat_dom"/>
</dbReference>
<dbReference type="InterPro" id="IPR029071">
    <property type="entry name" value="Ubiquitin-like_domsf"/>
</dbReference>
<dbReference type="PANTHER" id="PTHR46221">
    <property type="entry name" value="FERM AND PDZ DOMAIN-CONTAINING PROTEIN FAMILY MEMBER"/>
    <property type="match status" value="1"/>
</dbReference>
<dbReference type="PANTHER" id="PTHR46221:SF12">
    <property type="entry name" value="NON-SPECIFIC PROTEIN-TYROSINE KINASE"/>
    <property type="match status" value="1"/>
</dbReference>
<dbReference type="Pfam" id="PF21477">
    <property type="entry name" value="FERM_C_FAK1"/>
    <property type="match status" value="1"/>
</dbReference>
<dbReference type="Pfam" id="PF00373">
    <property type="entry name" value="FERM_M"/>
    <property type="match status" value="1"/>
</dbReference>
<dbReference type="Pfam" id="PF18038">
    <property type="entry name" value="FERM_N_2"/>
    <property type="match status" value="1"/>
</dbReference>
<dbReference type="Pfam" id="PF03623">
    <property type="entry name" value="Focal_AT"/>
    <property type="match status" value="1"/>
</dbReference>
<dbReference type="Pfam" id="PF07714">
    <property type="entry name" value="PK_Tyr_Ser-Thr"/>
    <property type="match status" value="1"/>
</dbReference>
<dbReference type="PRINTS" id="PR00109">
    <property type="entry name" value="TYRKINASE"/>
</dbReference>
<dbReference type="SMART" id="SM00295">
    <property type="entry name" value="B41"/>
    <property type="match status" value="1"/>
</dbReference>
<dbReference type="SMART" id="SM00219">
    <property type="entry name" value="TyrKc"/>
    <property type="match status" value="1"/>
</dbReference>
<dbReference type="SUPFAM" id="SSF68993">
    <property type="entry name" value="FAT domain of focal adhesion kinase"/>
    <property type="match status" value="1"/>
</dbReference>
<dbReference type="SUPFAM" id="SSF50729">
    <property type="entry name" value="PH domain-like"/>
    <property type="match status" value="1"/>
</dbReference>
<dbReference type="SUPFAM" id="SSF56112">
    <property type="entry name" value="Protein kinase-like (PK-like)"/>
    <property type="match status" value="1"/>
</dbReference>
<dbReference type="SUPFAM" id="SSF47031">
    <property type="entry name" value="Second domain of FERM"/>
    <property type="match status" value="1"/>
</dbReference>
<dbReference type="SUPFAM" id="SSF54236">
    <property type="entry name" value="Ubiquitin-like"/>
    <property type="match status" value="1"/>
</dbReference>
<dbReference type="PROSITE" id="PS00661">
    <property type="entry name" value="FERM_2"/>
    <property type="match status" value="1"/>
</dbReference>
<dbReference type="PROSITE" id="PS50057">
    <property type="entry name" value="FERM_3"/>
    <property type="match status" value="1"/>
</dbReference>
<dbReference type="PROSITE" id="PS00107">
    <property type="entry name" value="PROTEIN_KINASE_ATP"/>
    <property type="match status" value="1"/>
</dbReference>
<dbReference type="PROSITE" id="PS50011">
    <property type="entry name" value="PROTEIN_KINASE_DOM"/>
    <property type="match status" value="1"/>
</dbReference>
<dbReference type="PROSITE" id="PS00109">
    <property type="entry name" value="PROTEIN_KINASE_TYR"/>
    <property type="match status" value="1"/>
</dbReference>
<comment type="function">
    <text evidence="2 4 11">Non-receptor protein-tyrosine kinase that plays an essential role in regulating cell migration, adhesion, spreading, reorganization of the actin cytoskeleton, formation and disassembly of focal adhesions and cell protrusions, cell cycle progression, cell proliferation and apoptosis. Required for early embryonic development and placenta development. Required for embryonic angiogenesis, normal cardiomyocyte migration and proliferation, and normal heart development. Regulates axon growth and neuronal cell migration, axon branching and synapse formation; required for normal development of the nervous system. Plays a role in osteogenesis and differentiation of osteoblasts. Functions in integrin signal transduction, but also in signaling downstream of numerous growth factor receptors, G-protein coupled receptors (GPCR), EPHA2, netrin receptors and LDL receptors. Forms multisubunit signaling complexes with SRC and SRC family members upon activation; this leads to the phosphorylation of additional tyrosine residues, creating binding sites for scaffold proteins, effectors and substrates. Regulates numerous signaling pathways. Promotes activation of phosphatidylinositol 3-kinase and the AKT1 signaling cascade. Promotes activation of MAPK1/ERK2, MAPK3/ERK1 and the MAP kinase signaling cascade. Promotes localized and transient activation of guanine nucleotide exchange factors (GEFs) and GTPase-activating proteins (GAPs), and thereby modulates the activity of Rho family GTPases. Signaling via CAS family members mediates activation of RAC1. Phosphorylates NEDD9 following integrin stimulation (By similarity). Recruits the ubiquitin ligase MDM2 to P53/TP53 in the nucleus, and thereby regulates P53/TP53 activity, P53/TP53 ubiquitination and proteasomal degradation. Phosphorylates SRC; this increases SRC kinase activity. Phosphorylates ACTN1, ARHGEF7, GRB7, RET and WASL. Promotes phosphorylation of PXN and STAT1; most likely PXN and STAT1 are phosphorylated by a SRC family kinase that is recruited to autophosphorylated PTK2/FAK1, rather than by PTK2/FAK1 itself. Promotes phosphorylation of BCAR1; GIT2 and SHC1; this requires both SRC and PTK2/FAK1. Promotes phosphorylation of BMX and PIK3R1.</text>
</comment>
<comment type="function">
    <molecule>Isoform 2</molecule>
    <text evidence="4">Does not contain a kinase domain and inhibits PTK2/FAK1 phosphorylation and signaling. Its enhanced expression can attenuate the nuclear accumulation of LPXN and limit its ability to enhance serum response factor (SRF)-dependent gene transcription (By similarity).</text>
</comment>
<comment type="catalytic activity">
    <reaction evidence="7">
        <text>L-tyrosyl-[protein] + ATP = O-phospho-L-tyrosyl-[protein] + ADP + H(+)</text>
        <dbReference type="Rhea" id="RHEA:10596"/>
        <dbReference type="Rhea" id="RHEA-COMP:10136"/>
        <dbReference type="Rhea" id="RHEA-COMP:20101"/>
        <dbReference type="ChEBI" id="CHEBI:15378"/>
        <dbReference type="ChEBI" id="CHEBI:30616"/>
        <dbReference type="ChEBI" id="CHEBI:46858"/>
        <dbReference type="ChEBI" id="CHEBI:61978"/>
        <dbReference type="ChEBI" id="CHEBI:456216"/>
        <dbReference type="EC" id="2.7.10.2"/>
    </reaction>
</comment>
<comment type="activity regulation">
    <text>Subject to autoinhibition, mediated by interactions between the FERM domain and the kinase domain. Activated by autophosphorylation at Tyr-397. This promotes interaction with SRC and phosphorylation at Tyr-576 and Tyr-577 in the kinase activation loop by SRC. Phosphorylation at Tyr-397, Tyr-576 and Tyr-577 is required for maximal kinase activity.</text>
</comment>
<comment type="subunit">
    <text evidence="2 4">Interacts with GIT1. Component of a complex that contains at least FER, CTTN and PTK2/FAK1. Interacts with BMX. Interacts with STEAP4. Interacts with ZFYVE21. Interacts with ESR1. Interacts with PIK3R1 or PIK3R2. Interacts with FGR, FLT4 and RET. Interacts with EPHA2 in resting cells; activation of EPHA2 recruits PTPN11, leading to dephosphorylation of PTK2/FAK1 and dissociation of the complex. Interacts with EPHA1 (kinase activity-dependent). Interacts with P53/TP53. Interacts (via first Pro-rich region) with CAS family members (via SH3 domain), including BCAR1, BCAR3, and CASS4. Interacts with NEDD9 (via SH3 domain) (By similarity). Interacts with TGFB1I1. Interacts with SRC, GRB2 and GRB7. Interacts with ARHGEF28. Interacts with SHB. Part of a complex composed of THSD1, PTK2/FAK1, TLN1 and VCL (By similarity). Interacts with PXN and TLN1. Interacts with SORBS1. Interacts with STAT1. Interacts with WASL. Interacts with ARHGAP26 and SHC1. Interacts with RB1CC1; this inhibits PTK2/FAK1 activity and activation of downstream signaling pathways. Interacts with ARHGEF7. Interacts with MDM2 (By similarity). Interacts with PIAS1. Interacts with DCC. Interacts with LPXN (via LD motif 3) (By similarity). Interacts with MISP (By similarity). Interacts with EMP2; regulates PTK2 activation and localization (By similarity). Interacts with DSCAM (By similarity). Interacts with AMBRA1 (By similarity). Interacts (when tyrosine-phosphorylated) with tensin TNS1; the interaction is increased by phosphorylation of TNS1 (By similarity).</text>
</comment>
<comment type="interaction">
    <interactant intactId="EBI-6252940">
        <id>O35346</id>
    </interactant>
    <interactant intactId="EBI-15348891">
        <id>Q6P6T5</id>
        <label>Ocln</label>
    </interactant>
    <organismsDiffer>false</organismsDiffer>
    <experiments>2</experiments>
</comment>
<comment type="interaction">
    <interactant intactId="EBI-6252940">
        <id>O35346</id>
    </interactant>
    <interactant intactId="EBI-6252940">
        <id>O35346</id>
        <label>Ptk2</label>
    </interactant>
    <organismsDiffer>false</organismsDiffer>
    <experiments>12</experiments>
</comment>
<comment type="interaction">
    <interactant intactId="EBI-6252940">
        <id>O35346</id>
    </interactant>
    <interactant intactId="EBI-6252926">
        <id>Q5XI86</id>
        <label>Ptrh2</label>
    </interactant>
    <organismsDiffer>false</organismsDiffer>
    <experiments>3</experiments>
</comment>
<comment type="subcellular location">
    <subcellularLocation>
        <location evidence="3">Cell junction</location>
        <location evidence="3">Focal adhesion</location>
    </subcellularLocation>
    <subcellularLocation>
        <location evidence="3">Cell membrane</location>
        <topology evidence="3">Peripheral membrane protein</topology>
        <orientation evidence="3">Cytoplasmic side</orientation>
    </subcellularLocation>
    <subcellularLocation>
        <location evidence="3">Cytoplasm</location>
        <location evidence="3">Perinuclear region</location>
    </subcellularLocation>
    <subcellularLocation>
        <location>Cytoplasm</location>
        <location>Cell cortex</location>
    </subcellularLocation>
    <subcellularLocation>
        <location evidence="9">Cytoplasm</location>
        <location evidence="9">Cytoskeleton</location>
    </subcellularLocation>
    <subcellularLocation>
        <location evidence="1">Cytoplasm</location>
        <location evidence="1">Cytoskeleton</location>
        <location evidence="1">Microtubule organizing center</location>
        <location evidence="1">Centrosome</location>
    </subcellularLocation>
    <subcellularLocation>
        <location evidence="9 10 12">Nucleus</location>
    </subcellularLocation>
    <subcellularLocation>
        <location evidence="4">Cytoplasm</location>
        <location evidence="4">Cytoskeleton</location>
        <location evidence="4">Cilium basal body</location>
    </subcellularLocation>
    <subcellularLocation>
        <location evidence="12">Cytoplasm</location>
    </subcellularLocation>
    <text evidence="2">Constituent of focal adhesions. Detected at microtubules.</text>
</comment>
<comment type="alternative products">
    <event type="alternative promoter"/>
    <isoform>
        <id>O35346-1</id>
        <name>1</name>
        <sequence type="displayed"/>
    </isoform>
    <isoform>
        <id>O35346-2</id>
        <name>2</name>
        <name>FRNK</name>
        <sequence type="described" ref="VSP_042172"/>
    </isoform>
</comment>
<comment type="domain">
    <text evidence="1">The first Pro-rich domain interacts with the SH3 domain of CAS family members, such as BCAR1 and NEDD9.</text>
</comment>
<comment type="domain">
    <text>The C-terminal region is the site of focal adhesion targeting (FAT) sequence which mediates the localization of FAK1 to focal adhesions.</text>
</comment>
<comment type="PTM">
    <text evidence="2">Phosphorylated on tyrosine residues upon activation, e.g. upon integrin signaling. Tyr-397 is the major autophosphorylation site, but other kinases can also phosphorylate this residue. Phosphorylation at Tyr-397 promotes interaction with SRC and SRC family members, leading to phosphorylation at Tyr-576, Tyr-577 and at additional tyrosine residues. FGR promotes phosphorylation at Tyr-397 and Tyr-576. FER promotes phosphorylation at Tyr-577, Tyr-861 and Tyr-928, even when cells are not adherent. Tyr-397, Tyr-576 and Ser-722 are phosphorylated only when cells are adherent. Phosphorylation at Tyr-397 is important for interaction with BMX, PIK3R1 and SHC1. Phosphorylation at Tyr-928 is important for interaction with GRB2. Dephosphorylated by PTPN11; PTPN11 is recruited to PTK2 via EPHA2 (tyrosine phosphorylated). Microtubule-induced dephosphorylation at Tyr-397 is crucial for the induction of focal adhesion disassembly; this dephosphorylation could be catalyzed by PTPN11 and regulated by ZFYVE21 (By similarity). Phosphorylation on tyrosine residues is enhanced by NTN1 (By similarity).</text>
</comment>
<comment type="PTM">
    <text evidence="9 10 12">Sumoylated; this enhances autophosphorylation.</text>
</comment>
<comment type="similarity">
    <text evidence="6">Belongs to the protein kinase superfamily. Tyr protein kinase family. FAK subfamily.</text>
</comment>
<gene>
    <name evidence="14" type="primary">Ptk2</name>
    <name type="synonym">Fak</name>
    <name type="synonym">Fak1</name>
</gene>
<sequence length="1055" mass="119717">MAAAYLDPNLNHTPSSSTKTHLGTGTERSPGAMERVLKVFHYFESSNEPTTWASIIRHGDATDVRGIIQKIVDSHKVKHVACYGFRLSHLRSEEVHWLHVDMGVSSVREKYELAHPPEEWKYELRIRYLPKGFLNQFTEDKPTLNFFYQQVKSDYMLEIADQVDQDIALKLGCLEIRRSYWEMRGNALEKKSNYEVLEKDVGLKRFFPKSLLDSVKAKTLRKLIQQTFRQFANLNREESILKFFEILSPVYRFDKECFKCALGSSWIISVELAIGPEEGISYLTDKGCNPTHLADFNQVQTIQYSNSEDKDRKGMLQLKIAGAPEPLTVTAPSLTIAENMADLIDGYCRLVNGATQSFIIRPQKEGERALPSIPKLANNEKQGMRTHAVSVSETDDYAEIIDEEDTYTMPSTRDYEIQRERIELGRCIGEGQFGDVHQGVYLSPENPALAVAIKTCKNCTSDSVREKFLQEALTMRQFDHPHIVKLIGVITENPVWIIMELCTLGELRSFLQVRKYSLDLASLILYAYQLSTALAYLESKRFVHRDIAARNVLVSSNDCVKLGDFGLSRYMEDSTYYKASKGKLPIKWMAPESINFRRFTSASDVWMFGVCMWEILMHGVKPFQGVKNNDVIGRIENGERLPMPPNCPPTLYSLMTKCWAYDPSRRPRFTELKAQLSTILEEEKVQQEERMRMESRRQATVSWDSGGSDEAPPKPSRPGYPSPRSSEGFYPSPQHMVQTNHYQISGYPGSHGIPAMAGSIYPGQASLLDQTELWNHRPQEMSMWQPSVEDSAALDLRGMGQVLPPHLMEERLIRQQQEMEEDQRWLEKEERFLKPDVRLSRGSIDREDGSFQGPTGNQHIYQPVGKPDPAAPPKKPPRPGAPGHLSNLSSISSPAESYNEGVKPWRLQPQEISPPPTANLDRSNDKVYENVTGLVKAVIEMSSKIQPAPPEEYVPMVKEVGLALRTLLATVDETIPILPASTHREIEMAQKLLNSDLGELISKMKLAQQYVMTSLQQEYKKQMLTAAHALAVDAKNLLDVIDQARLKMLGQTRPH</sequence>
<evidence type="ECO:0000250" key="1"/>
<evidence type="ECO:0000250" key="2">
    <source>
        <dbReference type="UniProtKB" id="P34152"/>
    </source>
</evidence>
<evidence type="ECO:0000250" key="3">
    <source>
        <dbReference type="UniProtKB" id="Q00944"/>
    </source>
</evidence>
<evidence type="ECO:0000250" key="4">
    <source>
        <dbReference type="UniProtKB" id="Q05397"/>
    </source>
</evidence>
<evidence type="ECO:0000255" key="5">
    <source>
        <dbReference type="PROSITE-ProRule" id="PRU00084"/>
    </source>
</evidence>
<evidence type="ECO:0000255" key="6">
    <source>
        <dbReference type="PROSITE-ProRule" id="PRU00159"/>
    </source>
</evidence>
<evidence type="ECO:0000255" key="7">
    <source>
        <dbReference type="PROSITE-ProRule" id="PRU10028"/>
    </source>
</evidence>
<evidence type="ECO:0000256" key="8">
    <source>
        <dbReference type="SAM" id="MobiDB-lite"/>
    </source>
</evidence>
<evidence type="ECO:0000269" key="9">
    <source>
    </source>
</evidence>
<evidence type="ECO:0000269" key="10">
    <source>
    </source>
</evidence>
<evidence type="ECO:0000269" key="11">
    <source>
    </source>
</evidence>
<evidence type="ECO:0000269" key="12">
    <source>
    </source>
</evidence>
<evidence type="ECO:0000305" key="13"/>
<evidence type="ECO:0000312" key="14">
    <source>
        <dbReference type="RGD" id="3443"/>
    </source>
</evidence>
<evidence type="ECO:0007744" key="15">
    <source>
    </source>
</evidence>
<reference key="1">
    <citation type="journal article" date="1996" name="Brain Res. Mol. Brain Res.">
        <title>Cloning of focal adhesion kinase, pp125FAK, from rat brain reveals multiple transcripts with different patterns of expression.</title>
        <authorList>
            <person name="Burgaya F."/>
            <person name="Girault J.A."/>
        </authorList>
    </citation>
    <scope>NUCLEOTIDE SEQUENCE [MRNA] (ISOFORM 1)</scope>
    <source>
        <strain>Sprague-Dawley</strain>
        <tissue>Corpus striatum</tissue>
    </source>
</reference>
<reference key="2">
    <citation type="submission" date="1995-12" db="EMBL/GenBank/DDBJ databases">
        <authorList>
            <person name="Sasaki T."/>
            <person name="Nagura K."/>
            <person name="Sasaki H."/>
        </authorList>
    </citation>
    <scope>NUCLEOTIDE SEQUENCE [MRNA] OF 350-528 (ISOFORM 1)</scope>
    <source>
        <strain>Wistar</strain>
    </source>
</reference>
<reference key="3">
    <citation type="journal article" date="1998" name="J. Biol. Chem.">
        <title>Cell adhesion kinase beta forms a complex with a new member, Hic-5, of proteins localized at focal adhesions.</title>
        <authorList>
            <person name="Matsuya M."/>
            <person name="Sasaki H."/>
            <person name="Aoto H."/>
            <person name="Mitaka T."/>
            <person name="Nagura K."/>
            <person name="Ohba T."/>
            <person name="Ishino M."/>
            <person name="Takahashi S."/>
            <person name="Suzuki R."/>
            <person name="Sasaki T."/>
        </authorList>
    </citation>
    <scope>INTERACTION WITH TGFB1I1</scope>
</reference>
<reference key="4">
    <citation type="journal article" date="2003" name="Hypertension">
        <title>Subcellular redistribution of focal adhesion kinase and its related nonkinase in hypertrophic myocardium.</title>
        <authorList>
            <person name="Yi X.P."/>
            <person name="Wang X."/>
            <person name="Gerdes A.M."/>
            <person name="Li F."/>
        </authorList>
    </citation>
    <scope>SUBCELLULAR LOCATION</scope>
    <scope>PHOSPHORYLATION AT SER-722 AND SER-913</scope>
    <scope>CHARACTERIZATION OF ISOFORM 2</scope>
</reference>
<reference key="5">
    <citation type="journal article" date="2003" name="J. Biol. Chem.">
        <title>Direct interaction of focal adhesion kinase with p190RhoGEF.</title>
        <authorList>
            <person name="Zhai J."/>
            <person name="Lin H."/>
            <person name="Nie Z."/>
            <person name="Wu J."/>
            <person name="Canete-Soler R."/>
            <person name="Schlaepfer W.W."/>
            <person name="Schlaepfer D.D."/>
        </authorList>
    </citation>
    <scope>INTERACTION WITH ARHGEF28</scope>
</reference>
<reference key="6">
    <citation type="journal article" date="2003" name="J. Biol. Chem.">
        <title>PIAS1-mediated sumoylation of focal adhesion kinase activates its autophosphorylation.</title>
        <authorList>
            <person name="Kadare G."/>
            <person name="Toutant M."/>
            <person name="Formstecher E."/>
            <person name="Corvol J.C."/>
            <person name="Carnaud M."/>
            <person name="Boutterin M.C."/>
            <person name="Girault J.A."/>
        </authorList>
    </citation>
    <scope>SUMOYLATION AT LYS-152</scope>
    <scope>MUTAGENESIS OF LYS-152</scope>
    <scope>INTERACTION WITH PIAS1</scope>
    <scope>AUTOPHOSPHORYLATION</scope>
    <scope>PHOSPHORYLATION AT TYR-397</scope>
    <scope>SUBCELLULAR LOCATION</scope>
</reference>
<reference key="7">
    <citation type="journal article" date="2004" name="Nat. Neurosci.">
        <title>Focal adhesion kinase in netrin-1 signaling.</title>
        <authorList>
            <person name="Ren X.R."/>
            <person name="Ming G.L."/>
            <person name="Xie Y."/>
            <person name="Hong Y."/>
            <person name="Sun D.M."/>
            <person name="Zhao Z.Q."/>
            <person name="Feng Z."/>
            <person name="Wang Q."/>
            <person name="Shim S."/>
            <person name="Chen Z.F."/>
            <person name="Song H.J."/>
            <person name="Mei L."/>
            <person name="Xiong W.C."/>
        </authorList>
    </citation>
    <scope>FUNCTION</scope>
    <scope>INTERACTION WITH DCC</scope>
</reference>
<reference key="8">
    <citation type="journal article" date="2006" name="Am. J. Physiol.">
        <title>Nuclear compartmentalization of FAK and FRNK in cardiac myocytes.</title>
        <authorList>
            <person name="Yi X.P."/>
            <person name="Zhou J."/>
            <person name="Huber L."/>
            <person name="Qu J."/>
            <person name="Wang X."/>
            <person name="Gerdes A.M."/>
            <person name="Li F."/>
        </authorList>
    </citation>
    <scope>SUBCELLULAR LOCATION</scope>
    <scope>PHOSPHORYLATION</scope>
    <scope>CHARACTERIZATION OF ISOFORM 2</scope>
</reference>
<reference key="9">
    <citation type="journal article" date="2012" name="Nat. Commun.">
        <title>Quantitative maps of protein phosphorylation sites across 14 different rat organs and tissues.</title>
        <authorList>
            <person name="Lundby A."/>
            <person name="Secher A."/>
            <person name="Lage K."/>
            <person name="Nordsborg N.B."/>
            <person name="Dmytriyev A."/>
            <person name="Lundby C."/>
            <person name="Olsen J.V."/>
        </authorList>
    </citation>
    <scope>PHOSPHORYLATION [LARGE SCALE ANALYSIS] AT TYR-576; SER-913 AND TYR-928</scope>
    <scope>IDENTIFICATION BY MASS SPECTROMETRY [LARGE SCALE ANALYSIS]</scope>
</reference>
<protein>
    <recommendedName>
        <fullName evidence="13">Focal adhesion kinase 1</fullName>
        <shortName>FADK 1</shortName>
        <ecNumber>2.7.10.2</ecNumber>
    </recommendedName>
    <alternativeName>
        <fullName>Focal adhesion kinase-related nonkinase</fullName>
        <shortName>FRNK</shortName>
    </alternativeName>
    <alternativeName>
        <fullName>Protein-tyrosine kinase 2</fullName>
    </alternativeName>
    <alternativeName>
        <fullName>p125FAK</fullName>
    </alternativeName>
    <alternativeName>
        <fullName>pp125FAK</fullName>
    </alternativeName>
</protein>
<proteinExistence type="evidence at protein level"/>
<name>FAK1_RAT</name>
<accession>O35346</accession>
<accession>Q62900</accession>